<proteinExistence type="inferred from homology"/>
<keyword id="KW-0028">Amino-acid biosynthesis</keyword>
<keyword id="KW-0067">ATP-binding</keyword>
<keyword id="KW-0418">Kinase</keyword>
<keyword id="KW-0547">Nucleotide-binding</keyword>
<keyword id="KW-0791">Threonine biosynthesis</keyword>
<keyword id="KW-0808">Transferase</keyword>
<accession>A0AYX8</accession>
<dbReference type="EC" id="2.7.1.39" evidence="1"/>
<dbReference type="EMBL" id="CP000459">
    <property type="protein sequence ID" value="ABK10604.1"/>
    <property type="molecule type" value="Genomic_DNA"/>
</dbReference>
<dbReference type="RefSeq" id="WP_011548158.1">
    <property type="nucleotide sequence ID" value="NC_008543.1"/>
</dbReference>
<dbReference type="SMR" id="A0AYX8"/>
<dbReference type="KEGG" id="bch:Bcen2424_3867"/>
<dbReference type="HOGENOM" id="CLU_053300_0_0_4"/>
<dbReference type="UniPathway" id="UPA00050">
    <property type="reaction ID" value="UER00064"/>
</dbReference>
<dbReference type="GO" id="GO:0005524">
    <property type="term" value="F:ATP binding"/>
    <property type="evidence" value="ECO:0007669"/>
    <property type="project" value="UniProtKB-KW"/>
</dbReference>
<dbReference type="GO" id="GO:0004413">
    <property type="term" value="F:homoserine kinase activity"/>
    <property type="evidence" value="ECO:0007669"/>
    <property type="project" value="UniProtKB-UniRule"/>
</dbReference>
<dbReference type="GO" id="GO:0009088">
    <property type="term" value="P:threonine biosynthetic process"/>
    <property type="evidence" value="ECO:0007669"/>
    <property type="project" value="UniProtKB-UniRule"/>
</dbReference>
<dbReference type="CDD" id="cd05153">
    <property type="entry name" value="HomoserineK_II"/>
    <property type="match status" value="1"/>
</dbReference>
<dbReference type="Gene3D" id="3.90.1200.10">
    <property type="match status" value="1"/>
</dbReference>
<dbReference type="Gene3D" id="3.30.200.20">
    <property type="entry name" value="Phosphorylase Kinase, domain 1"/>
    <property type="match status" value="1"/>
</dbReference>
<dbReference type="HAMAP" id="MF_00301">
    <property type="entry name" value="Homoser_kinase_2"/>
    <property type="match status" value="1"/>
</dbReference>
<dbReference type="InterPro" id="IPR002575">
    <property type="entry name" value="Aminoglycoside_PTrfase"/>
</dbReference>
<dbReference type="InterPro" id="IPR005280">
    <property type="entry name" value="Homoserine_kinase_II"/>
</dbReference>
<dbReference type="InterPro" id="IPR011009">
    <property type="entry name" value="Kinase-like_dom_sf"/>
</dbReference>
<dbReference type="InterPro" id="IPR050249">
    <property type="entry name" value="Pseudomonas-type_ThrB"/>
</dbReference>
<dbReference type="NCBIfam" id="NF003558">
    <property type="entry name" value="PRK05231.1"/>
    <property type="match status" value="1"/>
</dbReference>
<dbReference type="NCBIfam" id="TIGR00938">
    <property type="entry name" value="thrB_alt"/>
    <property type="match status" value="1"/>
</dbReference>
<dbReference type="PANTHER" id="PTHR21064:SF6">
    <property type="entry name" value="AMINOGLYCOSIDE PHOSPHOTRANSFERASE DOMAIN-CONTAINING PROTEIN"/>
    <property type="match status" value="1"/>
</dbReference>
<dbReference type="PANTHER" id="PTHR21064">
    <property type="entry name" value="AMINOGLYCOSIDE PHOSPHOTRANSFERASE DOMAIN-CONTAINING PROTEIN-RELATED"/>
    <property type="match status" value="1"/>
</dbReference>
<dbReference type="Pfam" id="PF01636">
    <property type="entry name" value="APH"/>
    <property type="match status" value="1"/>
</dbReference>
<dbReference type="SUPFAM" id="SSF56112">
    <property type="entry name" value="Protein kinase-like (PK-like)"/>
    <property type="match status" value="1"/>
</dbReference>
<feature type="chain" id="PRO_0000300785" description="Homoserine kinase">
    <location>
        <begin position="1"/>
        <end position="332"/>
    </location>
</feature>
<sequence>MAVFTAVSDSDLAQWMRHYELGDVLAFRGIPSGIENSNFFLTTTRGEYVLTIFEKLTAQQLPFYLDLMRHLAAHGVPVPDPIPRDDGALFGELHGKPAAIVTKLDGAAELAPGVEHCIEVGQMLARLHLAGRDYPRNQPNLRSLPWWQENVPAIVPFITDAQRALLEGELAHQAGFFASDDYAALPAGPCHCDLFRDNVLFAHAAPGTGHDVRLGGFFDFYFAGCDKWLFDVAVTVNDWCVDLATGVLDVARADALLRAYQTVRPFTAEERRHWSDMLRAGAYRFWVSRLYDFYLPRAAEMLKPHDPGHFERILRERIAHTPALPEIQTACN</sequence>
<reference key="1">
    <citation type="submission" date="2006-08" db="EMBL/GenBank/DDBJ databases">
        <title>Complete sequence of chromosome 2 of Burkholderia cenocepacia HI2424.</title>
        <authorList>
            <person name="Copeland A."/>
            <person name="Lucas S."/>
            <person name="Lapidus A."/>
            <person name="Barry K."/>
            <person name="Detter J.C."/>
            <person name="Glavina del Rio T."/>
            <person name="Hammon N."/>
            <person name="Israni S."/>
            <person name="Pitluck S."/>
            <person name="Chain P."/>
            <person name="Malfatti S."/>
            <person name="Shin M."/>
            <person name="Vergez L."/>
            <person name="Schmutz J."/>
            <person name="Larimer F."/>
            <person name="Land M."/>
            <person name="Hauser L."/>
            <person name="Kyrpides N."/>
            <person name="Kim E."/>
            <person name="LiPuma J.J."/>
            <person name="Gonzalez C.F."/>
            <person name="Konstantinidis K."/>
            <person name="Tiedje J.M."/>
            <person name="Richardson P."/>
        </authorList>
    </citation>
    <scope>NUCLEOTIDE SEQUENCE [LARGE SCALE GENOMIC DNA]</scope>
    <source>
        <strain>HI2424</strain>
    </source>
</reference>
<organism>
    <name type="scientific">Burkholderia cenocepacia (strain HI2424)</name>
    <dbReference type="NCBI Taxonomy" id="331272"/>
    <lineage>
        <taxon>Bacteria</taxon>
        <taxon>Pseudomonadati</taxon>
        <taxon>Pseudomonadota</taxon>
        <taxon>Betaproteobacteria</taxon>
        <taxon>Burkholderiales</taxon>
        <taxon>Burkholderiaceae</taxon>
        <taxon>Burkholderia</taxon>
        <taxon>Burkholderia cepacia complex</taxon>
    </lineage>
</organism>
<name>KHSE_BURCH</name>
<gene>
    <name evidence="1" type="primary">thrB</name>
    <name type="ordered locus">Bcen2424_3867</name>
</gene>
<comment type="catalytic activity">
    <reaction evidence="1">
        <text>L-homoserine + ATP = O-phospho-L-homoserine + ADP + H(+)</text>
        <dbReference type="Rhea" id="RHEA:13985"/>
        <dbReference type="ChEBI" id="CHEBI:15378"/>
        <dbReference type="ChEBI" id="CHEBI:30616"/>
        <dbReference type="ChEBI" id="CHEBI:57476"/>
        <dbReference type="ChEBI" id="CHEBI:57590"/>
        <dbReference type="ChEBI" id="CHEBI:456216"/>
        <dbReference type="EC" id="2.7.1.39"/>
    </reaction>
</comment>
<comment type="pathway">
    <text evidence="1">Amino-acid biosynthesis; L-threonine biosynthesis; L-threonine from L-aspartate: step 4/5.</text>
</comment>
<comment type="similarity">
    <text evidence="1">Belongs to the pseudomonas-type ThrB family.</text>
</comment>
<protein>
    <recommendedName>
        <fullName evidence="1">Homoserine kinase</fullName>
        <shortName evidence="1">HK</shortName>
        <shortName evidence="1">HSK</shortName>
        <ecNumber evidence="1">2.7.1.39</ecNumber>
    </recommendedName>
</protein>
<evidence type="ECO:0000255" key="1">
    <source>
        <dbReference type="HAMAP-Rule" id="MF_00301"/>
    </source>
</evidence>